<proteinExistence type="inferred from homology"/>
<gene>
    <name evidence="1" type="primary">rpsN</name>
    <name type="ordered locus">BCAN_A1243</name>
</gene>
<comment type="function">
    <text evidence="1">Binds 16S rRNA, required for the assembly of 30S particles and may also be responsible for determining the conformation of the 16S rRNA at the A site.</text>
</comment>
<comment type="subunit">
    <text evidence="1">Part of the 30S ribosomal subunit. Contacts proteins S3 and S10.</text>
</comment>
<comment type="similarity">
    <text evidence="1">Belongs to the universal ribosomal protein uS14 family.</text>
</comment>
<sequence>MAKTSAVEKNKRREKLVKRHAVKRARLKAIVMDQGLPLEERFRATIRLAELPRNSAKVRIRNRCEVSGRPRGYYRKLKMSRIALRQLGSLGQIPGVVKSSW</sequence>
<feature type="chain" id="PRO_1000128322" description="Small ribosomal subunit protein uS14">
    <location>
        <begin position="1"/>
        <end position="101"/>
    </location>
</feature>
<dbReference type="EMBL" id="CP000872">
    <property type="protein sequence ID" value="ABX62292.1"/>
    <property type="molecule type" value="Genomic_DNA"/>
</dbReference>
<dbReference type="RefSeq" id="WP_002964349.1">
    <property type="nucleotide sequence ID" value="NC_010103.1"/>
</dbReference>
<dbReference type="SMR" id="A9M5N7"/>
<dbReference type="GeneID" id="97533537"/>
<dbReference type="KEGG" id="bcs:BCAN_A1243"/>
<dbReference type="HOGENOM" id="CLU_139869_0_1_5"/>
<dbReference type="Proteomes" id="UP000001385">
    <property type="component" value="Chromosome I"/>
</dbReference>
<dbReference type="GO" id="GO:0005737">
    <property type="term" value="C:cytoplasm"/>
    <property type="evidence" value="ECO:0007669"/>
    <property type="project" value="UniProtKB-ARBA"/>
</dbReference>
<dbReference type="GO" id="GO:0015935">
    <property type="term" value="C:small ribosomal subunit"/>
    <property type="evidence" value="ECO:0007669"/>
    <property type="project" value="TreeGrafter"/>
</dbReference>
<dbReference type="GO" id="GO:0019843">
    <property type="term" value="F:rRNA binding"/>
    <property type="evidence" value="ECO:0007669"/>
    <property type="project" value="UniProtKB-UniRule"/>
</dbReference>
<dbReference type="GO" id="GO:0003735">
    <property type="term" value="F:structural constituent of ribosome"/>
    <property type="evidence" value="ECO:0007669"/>
    <property type="project" value="InterPro"/>
</dbReference>
<dbReference type="GO" id="GO:0006412">
    <property type="term" value="P:translation"/>
    <property type="evidence" value="ECO:0007669"/>
    <property type="project" value="UniProtKB-UniRule"/>
</dbReference>
<dbReference type="FunFam" id="1.10.287.1480:FF:000001">
    <property type="entry name" value="30S ribosomal protein S14"/>
    <property type="match status" value="1"/>
</dbReference>
<dbReference type="Gene3D" id="1.10.287.1480">
    <property type="match status" value="1"/>
</dbReference>
<dbReference type="HAMAP" id="MF_00537">
    <property type="entry name" value="Ribosomal_uS14_1"/>
    <property type="match status" value="1"/>
</dbReference>
<dbReference type="InterPro" id="IPR001209">
    <property type="entry name" value="Ribosomal_uS14"/>
</dbReference>
<dbReference type="InterPro" id="IPR023036">
    <property type="entry name" value="Ribosomal_uS14_bac/plastid"/>
</dbReference>
<dbReference type="InterPro" id="IPR018271">
    <property type="entry name" value="Ribosomal_uS14_CS"/>
</dbReference>
<dbReference type="NCBIfam" id="NF006477">
    <property type="entry name" value="PRK08881.1"/>
    <property type="match status" value="1"/>
</dbReference>
<dbReference type="PANTHER" id="PTHR19836">
    <property type="entry name" value="30S RIBOSOMAL PROTEIN S14"/>
    <property type="match status" value="1"/>
</dbReference>
<dbReference type="PANTHER" id="PTHR19836:SF19">
    <property type="entry name" value="SMALL RIBOSOMAL SUBUNIT PROTEIN US14M"/>
    <property type="match status" value="1"/>
</dbReference>
<dbReference type="Pfam" id="PF00253">
    <property type="entry name" value="Ribosomal_S14"/>
    <property type="match status" value="1"/>
</dbReference>
<dbReference type="SUPFAM" id="SSF57716">
    <property type="entry name" value="Glucocorticoid receptor-like (DNA-binding domain)"/>
    <property type="match status" value="1"/>
</dbReference>
<dbReference type="PROSITE" id="PS00527">
    <property type="entry name" value="RIBOSOMAL_S14"/>
    <property type="match status" value="1"/>
</dbReference>
<protein>
    <recommendedName>
        <fullName evidence="1">Small ribosomal subunit protein uS14</fullName>
    </recommendedName>
    <alternativeName>
        <fullName evidence="2">30S ribosomal protein S14</fullName>
    </alternativeName>
</protein>
<evidence type="ECO:0000255" key="1">
    <source>
        <dbReference type="HAMAP-Rule" id="MF_00537"/>
    </source>
</evidence>
<evidence type="ECO:0000305" key="2"/>
<organism>
    <name type="scientific">Brucella canis (strain ATCC 23365 / NCTC 10854 / RM-666)</name>
    <dbReference type="NCBI Taxonomy" id="483179"/>
    <lineage>
        <taxon>Bacteria</taxon>
        <taxon>Pseudomonadati</taxon>
        <taxon>Pseudomonadota</taxon>
        <taxon>Alphaproteobacteria</taxon>
        <taxon>Hyphomicrobiales</taxon>
        <taxon>Brucellaceae</taxon>
        <taxon>Brucella/Ochrobactrum group</taxon>
        <taxon>Brucella</taxon>
    </lineage>
</organism>
<accession>A9M5N7</accession>
<name>RS14_BRUC2</name>
<reference key="1">
    <citation type="submission" date="2007-10" db="EMBL/GenBank/DDBJ databases">
        <title>Brucella canis ATCC 23365 whole genome shotgun sequencing project.</title>
        <authorList>
            <person name="Setubal J.C."/>
            <person name="Bowns C."/>
            <person name="Boyle S."/>
            <person name="Crasta O.R."/>
            <person name="Czar M.J."/>
            <person name="Dharmanolla C."/>
            <person name="Gillespie J.J."/>
            <person name="Kenyon R.W."/>
            <person name="Lu J."/>
            <person name="Mane S."/>
            <person name="Mohapatra S."/>
            <person name="Nagrani S."/>
            <person name="Purkayastha A."/>
            <person name="Rajasimha H.K."/>
            <person name="Shallom J.M."/>
            <person name="Shallom S."/>
            <person name="Shukla M."/>
            <person name="Snyder E.E."/>
            <person name="Sobral B.W."/>
            <person name="Wattam A.R."/>
            <person name="Will R."/>
            <person name="Williams K."/>
            <person name="Yoo H."/>
            <person name="Bruce D."/>
            <person name="Detter C."/>
            <person name="Munk C."/>
            <person name="Brettin T.S."/>
        </authorList>
    </citation>
    <scope>NUCLEOTIDE SEQUENCE [LARGE SCALE GENOMIC DNA]</scope>
    <source>
        <strain>ATCC 23365 / NCTC 10854 / RM-666</strain>
    </source>
</reference>
<keyword id="KW-1185">Reference proteome</keyword>
<keyword id="KW-0687">Ribonucleoprotein</keyword>
<keyword id="KW-0689">Ribosomal protein</keyword>
<keyword id="KW-0694">RNA-binding</keyword>
<keyword id="KW-0699">rRNA-binding</keyword>